<reference key="1">
    <citation type="journal article" date="2001" name="Virology">
        <title>Identification and mapping of single nucleotide polymorphisms in the varicella-zoster virus genome.</title>
        <authorList>
            <person name="Faga B."/>
            <person name="Maury W."/>
            <person name="Bruckner D.A."/>
            <person name="Grose C."/>
        </authorList>
    </citation>
    <scope>NUCLEOTIDE SEQUENCE [GENOMIC DNA]</scope>
    <source>
        <strain>Oka varicella vaccine Biken (V-Oka-Biken)</strain>
    </source>
</reference>
<reference key="2">
    <citation type="journal article" date="2002" name="J. Virol.">
        <title>Comparison of the complete DNA sequences of the Oka varicella vaccine and its parental virus.</title>
        <authorList>
            <person name="Gomi Y."/>
            <person name="Sunamachi H."/>
            <person name="Mori Y."/>
            <person name="Nagaike K."/>
            <person name="Takahashi M."/>
            <person name="Yamanishi K."/>
        </authorList>
    </citation>
    <scope>NUCLEOTIDE SEQUENCE [LARGE SCALE GENOMIC DNA]</scope>
    <source>
        <strain>Isolate Human/Japan/P-Oka/1970</strain>
        <strain>Oka varicella vaccine Biken (V-Oka-Biken)</strain>
    </source>
</reference>
<reference key="3">
    <citation type="journal article" date="2008" name="J. Virol.">
        <title>Complete DNA sequences of two oka strain varicella-zoster virus genomes.</title>
        <authorList>
            <person name="Tillieux S.L."/>
            <person name="Halsey W.S."/>
            <person name="Thomas E.S."/>
            <person name="Voycik J.J."/>
            <person name="Sathe G.M."/>
            <person name="Vassilev V."/>
        </authorList>
    </citation>
    <scope>NUCLEOTIDE SEQUENCE [LARGE SCALE GENOMIC DNA]</scope>
    <source>
        <strain>Oka varicella vaccine VarilRix (V-Oka-GSK)</strain>
        <strain>Oka varicella vaccine Varivax (V-Oka-Merck)</strain>
    </source>
</reference>
<accession>Q775J3</accession>
<organism>
    <name type="scientific">Varicella-zoster virus (strain Oka vaccine)</name>
    <name type="common">HHV-3</name>
    <name type="synonym">Human herpesvirus 3</name>
    <dbReference type="NCBI Taxonomy" id="341980"/>
    <lineage>
        <taxon>Viruses</taxon>
        <taxon>Duplodnaviria</taxon>
        <taxon>Heunggongvirae</taxon>
        <taxon>Peploviricota</taxon>
        <taxon>Herviviricetes</taxon>
        <taxon>Herpesvirales</taxon>
        <taxon>Orthoherpesviridae</taxon>
        <taxon>Alphaherpesvirinae</taxon>
        <taxon>Varicellovirus</taxon>
        <taxon>Varicellovirus humanalpha3</taxon>
        <taxon>Human herpesvirus 3</taxon>
    </lineage>
</organism>
<organismHost>
    <name type="scientific">Homo sapiens</name>
    <name type="common">Human</name>
    <dbReference type="NCBI Taxonomy" id="9606"/>
</organismHost>
<feature type="signal peptide" evidence="1">
    <location>
        <begin position="1"/>
        <end position="17"/>
    </location>
</feature>
<feature type="chain" id="PRO_0000385473" description="Envelope glycoprotein H" evidence="1">
    <location>
        <begin position="18"/>
        <end position="841"/>
    </location>
</feature>
<feature type="topological domain" description="Virion surface" evidence="1">
    <location>
        <begin position="18"/>
        <end position="802"/>
    </location>
</feature>
<feature type="transmembrane region" description="Helical" evidence="1">
    <location>
        <begin position="803"/>
        <end position="823"/>
    </location>
</feature>
<feature type="topological domain" description="Intravirion" evidence="1">
    <location>
        <begin position="824"/>
        <end position="841"/>
    </location>
</feature>
<feature type="region of interest" description="Interaction with gL" evidence="1">
    <location>
        <begin position="246"/>
        <end position="309"/>
    </location>
</feature>
<feature type="glycosylation site" description="N-linked (GlcNAc...) asparagine; by host" evidence="1">
    <location>
        <position position="18"/>
    </location>
</feature>
<feature type="glycosylation site" description="N-linked (GlcNAc...) asparagine; by host" evidence="1">
    <location>
        <position position="45"/>
    </location>
</feature>
<feature type="glycosylation site" description="N-linked (GlcNAc...) asparagine; by host" evidence="1">
    <location>
        <position position="217"/>
    </location>
</feature>
<feature type="glycosylation site" description="N-linked (GlcNAc...) asparagine; by host" evidence="1">
    <location>
        <position position="317"/>
    </location>
</feature>
<feature type="glycosylation site" description="N-linked (GlcNAc...) asparagine; by host" evidence="1">
    <location>
        <position position="499"/>
    </location>
</feature>
<feature type="glycosylation site" description="N-linked (GlcNAc...) asparagine; by host" evidence="1">
    <location>
        <position position="522"/>
    </location>
</feature>
<feature type="glycosylation site" description="N-linked (GlcNAc...) asparagine; by host" evidence="1">
    <location>
        <position position="760"/>
    </location>
</feature>
<feature type="glycosylation site" description="N-linked (GlcNAc...) asparagine; by host" evidence="1">
    <location>
        <position position="783"/>
    </location>
</feature>
<feature type="strand" evidence="2">
    <location>
        <begin position="37"/>
        <end position="42"/>
    </location>
</feature>
<feature type="strand" evidence="2">
    <location>
        <begin position="44"/>
        <end position="47"/>
    </location>
</feature>
<feature type="strand" evidence="2">
    <location>
        <begin position="50"/>
        <end position="54"/>
    </location>
</feature>
<feature type="helix" evidence="2">
    <location>
        <begin position="63"/>
        <end position="66"/>
    </location>
</feature>
<feature type="strand" evidence="2">
    <location>
        <begin position="72"/>
        <end position="81"/>
    </location>
</feature>
<feature type="turn" evidence="2">
    <location>
        <begin position="84"/>
        <end position="86"/>
    </location>
</feature>
<feature type="strand" evidence="2">
    <location>
        <begin position="90"/>
        <end position="96"/>
    </location>
</feature>
<feature type="helix" evidence="2">
    <location>
        <begin position="99"/>
        <end position="101"/>
    </location>
</feature>
<feature type="strand" evidence="2">
    <location>
        <begin position="121"/>
        <end position="124"/>
    </location>
</feature>
<feature type="strand" evidence="2">
    <location>
        <begin position="130"/>
        <end position="132"/>
    </location>
</feature>
<feature type="helix" evidence="2">
    <location>
        <begin position="138"/>
        <end position="142"/>
    </location>
</feature>
<feature type="turn" evidence="2">
    <location>
        <begin position="145"/>
        <end position="147"/>
    </location>
</feature>
<feature type="helix" evidence="2">
    <location>
        <begin position="156"/>
        <end position="158"/>
    </location>
</feature>
<feature type="strand" evidence="2">
    <location>
        <begin position="170"/>
        <end position="174"/>
    </location>
</feature>
<feature type="strand" evidence="2">
    <location>
        <begin position="192"/>
        <end position="194"/>
    </location>
</feature>
<feature type="helix" evidence="2">
    <location>
        <begin position="201"/>
        <end position="204"/>
    </location>
</feature>
<feature type="strand" evidence="2">
    <location>
        <begin position="208"/>
        <end position="210"/>
    </location>
</feature>
<feature type="helix" evidence="2">
    <location>
        <begin position="212"/>
        <end position="215"/>
    </location>
</feature>
<feature type="strand" evidence="2">
    <location>
        <begin position="219"/>
        <end position="223"/>
    </location>
</feature>
<feature type="helix" evidence="2">
    <location>
        <begin position="226"/>
        <end position="228"/>
    </location>
</feature>
<feature type="strand" evidence="2">
    <location>
        <begin position="233"/>
        <end position="244"/>
    </location>
</feature>
<feature type="strand" evidence="2">
    <location>
        <begin position="246"/>
        <end position="255"/>
    </location>
</feature>
<feature type="strand" evidence="2">
    <location>
        <begin position="258"/>
        <end position="268"/>
    </location>
</feature>
<feature type="strand" evidence="2">
    <location>
        <begin position="271"/>
        <end position="277"/>
    </location>
</feature>
<feature type="strand" evidence="2">
    <location>
        <begin position="303"/>
        <end position="312"/>
    </location>
</feature>
<feature type="turn" evidence="2">
    <location>
        <begin position="314"/>
        <end position="317"/>
    </location>
</feature>
<feature type="strand" evidence="2">
    <location>
        <begin position="318"/>
        <end position="320"/>
    </location>
</feature>
<feature type="helix" evidence="2">
    <location>
        <begin position="323"/>
        <end position="327"/>
    </location>
</feature>
<feature type="helix" evidence="2">
    <location>
        <begin position="329"/>
        <end position="332"/>
    </location>
</feature>
<feature type="helix" evidence="2">
    <location>
        <begin position="336"/>
        <end position="351"/>
    </location>
</feature>
<feature type="turn" evidence="2">
    <location>
        <begin position="354"/>
        <end position="356"/>
    </location>
</feature>
<feature type="helix" evidence="2">
    <location>
        <begin position="361"/>
        <end position="385"/>
    </location>
</feature>
<feature type="strand" evidence="2">
    <location>
        <begin position="386"/>
        <end position="389"/>
    </location>
</feature>
<feature type="helix" evidence="2">
    <location>
        <begin position="390"/>
        <end position="409"/>
    </location>
</feature>
<feature type="turn" evidence="2">
    <location>
        <begin position="410"/>
        <end position="412"/>
    </location>
</feature>
<feature type="helix" evidence="2">
    <location>
        <begin position="416"/>
        <end position="418"/>
    </location>
</feature>
<feature type="strand" evidence="2">
    <location>
        <begin position="420"/>
        <end position="425"/>
    </location>
</feature>
<feature type="helix" evidence="2">
    <location>
        <begin position="430"/>
        <end position="441"/>
    </location>
</feature>
<feature type="helix" evidence="2">
    <location>
        <begin position="455"/>
        <end position="467"/>
    </location>
</feature>
<feature type="helix" evidence="2">
    <location>
        <begin position="475"/>
        <end position="494"/>
    </location>
</feature>
<feature type="helix" evidence="2">
    <location>
        <begin position="500"/>
        <end position="513"/>
    </location>
</feature>
<feature type="helix" evidence="2">
    <location>
        <begin position="525"/>
        <end position="539"/>
    </location>
</feature>
<feature type="helix" evidence="2">
    <location>
        <begin position="542"/>
        <end position="557"/>
    </location>
</feature>
<feature type="turn" evidence="2">
    <location>
        <begin position="561"/>
        <end position="563"/>
    </location>
</feature>
<feature type="helix" evidence="2">
    <location>
        <begin position="568"/>
        <end position="570"/>
    </location>
</feature>
<feature type="helix" evidence="2">
    <location>
        <begin position="574"/>
        <end position="576"/>
    </location>
</feature>
<feature type="helix" evidence="2">
    <location>
        <begin position="582"/>
        <end position="584"/>
    </location>
</feature>
<feature type="helix" evidence="2">
    <location>
        <begin position="586"/>
        <end position="595"/>
    </location>
</feature>
<feature type="helix" evidence="2">
    <location>
        <begin position="596"/>
        <end position="598"/>
    </location>
</feature>
<feature type="helix" evidence="2">
    <location>
        <begin position="600"/>
        <end position="607"/>
    </location>
</feature>
<feature type="helix" evidence="2">
    <location>
        <begin position="612"/>
        <end position="628"/>
    </location>
</feature>
<feature type="turn" evidence="2">
    <location>
        <begin position="629"/>
        <end position="632"/>
    </location>
</feature>
<feature type="helix" evidence="2">
    <location>
        <begin position="634"/>
        <end position="640"/>
    </location>
</feature>
<feature type="helix" evidence="2">
    <location>
        <begin position="642"/>
        <end position="645"/>
    </location>
</feature>
<feature type="strand" evidence="2">
    <location>
        <begin position="646"/>
        <end position="648"/>
    </location>
</feature>
<feature type="turn" evidence="2">
    <location>
        <begin position="651"/>
        <end position="655"/>
    </location>
</feature>
<feature type="strand" evidence="2">
    <location>
        <begin position="657"/>
        <end position="662"/>
    </location>
</feature>
<feature type="strand" evidence="2">
    <location>
        <begin position="667"/>
        <end position="674"/>
    </location>
</feature>
<feature type="strand" evidence="2">
    <location>
        <begin position="678"/>
        <end position="683"/>
    </location>
</feature>
<feature type="strand" evidence="2">
    <location>
        <begin position="685"/>
        <end position="687"/>
    </location>
</feature>
<feature type="strand" evidence="2">
    <location>
        <begin position="694"/>
        <end position="701"/>
    </location>
</feature>
<feature type="strand" evidence="2">
    <location>
        <begin position="705"/>
        <end position="707"/>
    </location>
</feature>
<feature type="strand" evidence="2">
    <location>
        <begin position="711"/>
        <end position="714"/>
    </location>
</feature>
<feature type="turn" evidence="2">
    <location>
        <begin position="718"/>
        <end position="720"/>
    </location>
</feature>
<feature type="strand" evidence="2">
    <location>
        <begin position="730"/>
        <end position="735"/>
    </location>
</feature>
<feature type="strand" evidence="2">
    <location>
        <begin position="740"/>
        <end position="742"/>
    </location>
</feature>
<feature type="helix" evidence="2">
    <location>
        <begin position="749"/>
        <end position="755"/>
    </location>
</feature>
<feature type="helix" evidence="2">
    <location>
        <begin position="764"/>
        <end position="766"/>
    </location>
</feature>
<feature type="turn" evidence="2">
    <location>
        <begin position="768"/>
        <end position="770"/>
    </location>
</feature>
<feature type="strand" evidence="2">
    <location>
        <begin position="775"/>
        <end position="780"/>
    </location>
</feature>
<feature type="strand" evidence="2">
    <location>
        <begin position="786"/>
        <end position="790"/>
    </location>
</feature>
<evidence type="ECO:0000255" key="1">
    <source>
        <dbReference type="HAMAP-Rule" id="MF_04033"/>
    </source>
</evidence>
<evidence type="ECO:0007829" key="2">
    <source>
        <dbReference type="PDB" id="4XHJ"/>
    </source>
</evidence>
<comment type="function">
    <text evidence="1">The heterodimer glycoprotein H-glycoprotein L is required for the fusion of viral and plasma membranes leading to virus entry into the host cell. Following initial binding to host receptor, membrane fusion is mediated by the fusion machinery composed of gB and the heterodimer gH/gL. May also be involved in the fusion between the virion envelope and the outer nuclear membrane during virion morphogenesis.</text>
</comment>
<comment type="subunit">
    <text evidence="1">Interacts with glycoprotein L (gL); this interaction is necessary for the correct processing and cell surface expression of gH. The heterodimer gH/gL seems to interact with gB trimers during fusion.</text>
</comment>
<comment type="subcellular location">
    <subcellularLocation>
        <location evidence="1">Virion membrane</location>
        <topology evidence="1">Single-pass type I membrane protein</topology>
    </subcellularLocation>
    <subcellularLocation>
        <location evidence="1">Host cell membrane</location>
        <topology evidence="1">Single-pass type I membrane protein</topology>
    </subcellularLocation>
    <subcellularLocation>
        <location evidence="1">Host endosome membrane</location>
        <topology evidence="1">Single-pass type I membrane protein</topology>
    </subcellularLocation>
    <text evidence="1">During virion morphogenesis, this protein probably accumulates in the endosomes and trans-Golgi where secondary envelopment occurs. It is probably transported to the cell surface from where it is endocytosed and directed to the trans-Golgi network (TGN).</text>
</comment>
<comment type="PTM">
    <text evidence="1">N-glycosylated, O-glycosylated, and sialylated.</text>
</comment>
<comment type="similarity">
    <text evidence="1">Belongs to the herpesviridae glycoprotein H family.</text>
</comment>
<name>GH_VZVO</name>
<sequence>MFALVLAVVILPLWTTANKSYVTPTPATRSIGHMSALLREYSDRNMSLKLEAFYPTGFDEELIKSLHWGNDRKHVFLVIVKVNPTTHEGDVGLVIFPKYLLSPYHFKAEHRAPFPAGRFGFLSHPVTPDVSFFDSSFAPYLTTQHLVAFTTFPPNPLVWHLERAETAATAERPFGVSLLPARPTVPKNTILEHKAHFATWDALARHTFFSAEAIITNSTLRIHVPLFGSVWPIRYWATGSVLLTSDSGRVEVNIGVGFMSSLISLSSGLPIELIVVPHTVKLNAVTSDTTWFQLNPPGPDPGPSYRVYLLGRGLDMNFSKHATVDICAYPEESLDYRYHLSMAHTEALRMTTKADQHDINEESYYHIAARIATSIFALSEMGRTTEYFLLDEIVDVQYQLKFLNYILMRIGAGAHPNTISGTSDLIFADPSQLHDELSLLFGQVKPANVDYFISYDEARDQLKTAYALSRGQDHVNALSLARRVIMSIYKGLLVKQNLNATERQALFFASMILLNFREGLENSSRVLDGRTTLLLMTSMCTAAHATQAALNIQEGLAYLNPSKHMFTIPNVYSPCMGSLRTDLTEEIHVMNLLSAIPTRPGLNEVLHTQLDESEIFDAAFKTMMIFTTWTAKDLHILHTHVPEVFTCQDAAARNGEYVLILPAVQGHSYVITRNKPQRGLVYSLADVDVYNPISVVYLSKDTCVSEHGVIETVALPHPDNLKECLYCGSVFLRYLTTGAIMDIIIIDSKDTERQLAAMGNSTIPPFNPDMHGDDSKAVLLFPNGTVVTLLGFERRQAIRMSGQYLGASLGGAFLAVVGFGIIGWMLCGNSRLREYNKIPLT</sequence>
<proteinExistence type="evidence at protein level"/>
<keyword id="KW-0002">3D-structure</keyword>
<keyword id="KW-1169">Fusion of virus membrane with host cell membrane</keyword>
<keyword id="KW-1168">Fusion of virus membrane with host membrane</keyword>
<keyword id="KW-0325">Glycoprotein</keyword>
<keyword id="KW-1032">Host cell membrane</keyword>
<keyword id="KW-1039">Host endosome</keyword>
<keyword id="KW-1043">Host membrane</keyword>
<keyword id="KW-0472">Membrane</keyword>
<keyword id="KW-0730">Sialic acid</keyword>
<keyword id="KW-0732">Signal</keyword>
<keyword id="KW-0812">Transmembrane</keyword>
<keyword id="KW-1133">Transmembrane helix</keyword>
<keyword id="KW-0261">Viral envelope protein</keyword>
<keyword id="KW-1162">Viral penetration into host cytoplasm</keyword>
<keyword id="KW-0946">Virion</keyword>
<keyword id="KW-1160">Virus entry into host cell</keyword>
<protein>
    <recommendedName>
        <fullName evidence="1">Envelope glycoprotein H</fullName>
        <shortName evidence="1">gH</shortName>
    </recommendedName>
</protein>
<dbReference type="EMBL" id="AH010548">
    <property type="protein sequence ID" value="AAK19939.1"/>
    <property type="molecule type" value="Genomic_DNA"/>
</dbReference>
<dbReference type="EMBL" id="AB097932">
    <property type="status" value="NOT_ANNOTATED_CDS"/>
    <property type="molecule type" value="Genomic_DNA"/>
</dbReference>
<dbReference type="EMBL" id="AB097933">
    <property type="status" value="NOT_ANNOTATED_CDS"/>
    <property type="molecule type" value="Genomic_DNA"/>
</dbReference>
<dbReference type="EMBL" id="DQ008354">
    <property type="protein sequence ID" value="AAY57649.1"/>
    <property type="molecule type" value="Genomic_DNA"/>
</dbReference>
<dbReference type="EMBL" id="DQ008355">
    <property type="protein sequence ID" value="AAY57720.1"/>
    <property type="molecule type" value="Genomic_DNA"/>
</dbReference>
<dbReference type="PDB" id="4XHJ">
    <property type="method" value="X-ray"/>
    <property type="resolution" value="3.16 A"/>
    <property type="chains" value="A/E=1-795"/>
</dbReference>
<dbReference type="PDB" id="4XI5">
    <property type="method" value="X-ray"/>
    <property type="resolution" value="3.90 A"/>
    <property type="chains" value="A=1-795"/>
</dbReference>
<dbReference type="PDBsum" id="4XHJ"/>
<dbReference type="PDBsum" id="4XI5"/>
<dbReference type="SMR" id="Q775J3"/>
<dbReference type="IntAct" id="Q775J3">
    <property type="interactions" value="5"/>
</dbReference>
<dbReference type="GlyCosmos" id="Q775J3">
    <property type="glycosylation" value="8 sites, No reported glycans"/>
</dbReference>
<dbReference type="ABCD" id="Q775J3">
    <property type="antibodies" value="2 sequenced antibodies"/>
</dbReference>
<dbReference type="EvolutionaryTrace" id="Q775J3"/>
<dbReference type="Proteomes" id="UP000002603">
    <property type="component" value="Genome"/>
</dbReference>
<dbReference type="Proteomes" id="UP000008504">
    <property type="component" value="Genome"/>
</dbReference>
<dbReference type="Proteomes" id="UP000008505">
    <property type="component" value="Genome"/>
</dbReference>
<dbReference type="Proteomes" id="UP000008506">
    <property type="component" value="Genome"/>
</dbReference>
<dbReference type="GO" id="GO:0044175">
    <property type="term" value="C:host cell endosome membrane"/>
    <property type="evidence" value="ECO:0007669"/>
    <property type="project" value="UniProtKB-SubCell"/>
</dbReference>
<dbReference type="GO" id="GO:0020002">
    <property type="term" value="C:host cell plasma membrane"/>
    <property type="evidence" value="ECO:0007669"/>
    <property type="project" value="UniProtKB-SubCell"/>
</dbReference>
<dbReference type="GO" id="GO:0016020">
    <property type="term" value="C:membrane"/>
    <property type="evidence" value="ECO:0007669"/>
    <property type="project" value="UniProtKB-KW"/>
</dbReference>
<dbReference type="GO" id="GO:0019031">
    <property type="term" value="C:viral envelope"/>
    <property type="evidence" value="ECO:0007669"/>
    <property type="project" value="UniProtKB-KW"/>
</dbReference>
<dbReference type="GO" id="GO:0055036">
    <property type="term" value="C:virion membrane"/>
    <property type="evidence" value="ECO:0007669"/>
    <property type="project" value="UniProtKB-SubCell"/>
</dbReference>
<dbReference type="GO" id="GO:0019064">
    <property type="term" value="P:fusion of virus membrane with host plasma membrane"/>
    <property type="evidence" value="ECO:0007669"/>
    <property type="project" value="UniProtKB-KW"/>
</dbReference>
<dbReference type="GO" id="GO:0046718">
    <property type="term" value="P:symbiont entry into host cell"/>
    <property type="evidence" value="ECO:0007669"/>
    <property type="project" value="UniProtKB-KW"/>
</dbReference>
<dbReference type="Gene3D" id="1.20.58.1340">
    <property type="match status" value="1"/>
</dbReference>
<dbReference type="Gene3D" id="3.30.500.50">
    <property type="match status" value="1"/>
</dbReference>
<dbReference type="Gene3D" id="2.60.40.3190">
    <property type="entry name" value="Herpesvirus glycoprotein H, C-terminal domain"/>
    <property type="match status" value="1"/>
</dbReference>
<dbReference type="HAMAP" id="MF_04033">
    <property type="entry name" value="HSV_GH"/>
    <property type="match status" value="1"/>
</dbReference>
<dbReference type="InterPro" id="IPR003493">
    <property type="entry name" value="Herpes_gH"/>
</dbReference>
<dbReference type="InterPro" id="IPR035305">
    <property type="entry name" value="Herpes_glycoH_C"/>
</dbReference>
<dbReference type="InterPro" id="IPR038172">
    <property type="entry name" value="Herpes_glycoH_C_sf"/>
</dbReference>
<dbReference type="Pfam" id="PF17488">
    <property type="entry name" value="Herpes_glycoH_C"/>
    <property type="match status" value="1"/>
</dbReference>
<dbReference type="Pfam" id="PF02489">
    <property type="entry name" value="Herpes_glycop_H"/>
    <property type="match status" value="1"/>
</dbReference>
<gene>
    <name evidence="1" type="primary">gH</name>
    <name type="ORF">ORF37</name>
</gene>